<accession>A7EM88</accession>
<name>FAL1_SCLS1</name>
<reference key="1">
    <citation type="journal article" date="2011" name="PLoS Genet.">
        <title>Genomic analysis of the necrotrophic fungal pathogens Sclerotinia sclerotiorum and Botrytis cinerea.</title>
        <authorList>
            <person name="Amselem J."/>
            <person name="Cuomo C.A."/>
            <person name="van Kan J.A.L."/>
            <person name="Viaud M."/>
            <person name="Benito E.P."/>
            <person name="Couloux A."/>
            <person name="Coutinho P.M."/>
            <person name="de Vries R.P."/>
            <person name="Dyer P.S."/>
            <person name="Fillinger S."/>
            <person name="Fournier E."/>
            <person name="Gout L."/>
            <person name="Hahn M."/>
            <person name="Kohn L."/>
            <person name="Lapalu N."/>
            <person name="Plummer K.M."/>
            <person name="Pradier J.-M."/>
            <person name="Quevillon E."/>
            <person name="Sharon A."/>
            <person name="Simon A."/>
            <person name="ten Have A."/>
            <person name="Tudzynski B."/>
            <person name="Tudzynski P."/>
            <person name="Wincker P."/>
            <person name="Andrew M."/>
            <person name="Anthouard V."/>
            <person name="Beever R.E."/>
            <person name="Beffa R."/>
            <person name="Benoit I."/>
            <person name="Bouzid O."/>
            <person name="Brault B."/>
            <person name="Chen Z."/>
            <person name="Choquer M."/>
            <person name="Collemare J."/>
            <person name="Cotton P."/>
            <person name="Danchin E.G."/>
            <person name="Da Silva C."/>
            <person name="Gautier A."/>
            <person name="Giraud C."/>
            <person name="Giraud T."/>
            <person name="Gonzalez C."/>
            <person name="Grossetete S."/>
            <person name="Gueldener U."/>
            <person name="Henrissat B."/>
            <person name="Howlett B.J."/>
            <person name="Kodira C."/>
            <person name="Kretschmer M."/>
            <person name="Lappartient A."/>
            <person name="Leroch M."/>
            <person name="Levis C."/>
            <person name="Mauceli E."/>
            <person name="Neuveglise C."/>
            <person name="Oeser B."/>
            <person name="Pearson M."/>
            <person name="Poulain J."/>
            <person name="Poussereau N."/>
            <person name="Quesneville H."/>
            <person name="Rascle C."/>
            <person name="Schumacher J."/>
            <person name="Segurens B."/>
            <person name="Sexton A."/>
            <person name="Silva E."/>
            <person name="Sirven C."/>
            <person name="Soanes D.M."/>
            <person name="Talbot N.J."/>
            <person name="Templeton M."/>
            <person name="Yandava C."/>
            <person name="Yarden O."/>
            <person name="Zeng Q."/>
            <person name="Rollins J.A."/>
            <person name="Lebrun M.-H."/>
            <person name="Dickman M."/>
        </authorList>
    </citation>
    <scope>NUCLEOTIDE SEQUENCE [LARGE SCALE GENOMIC DNA]</scope>
    <source>
        <strain>ATCC 18683 / 1980 / Ss-1</strain>
    </source>
</reference>
<evidence type="ECO:0000250" key="1"/>
<evidence type="ECO:0000255" key="2">
    <source>
        <dbReference type="PROSITE-ProRule" id="PRU00541"/>
    </source>
</evidence>
<evidence type="ECO:0000255" key="3">
    <source>
        <dbReference type="PROSITE-ProRule" id="PRU00542"/>
    </source>
</evidence>
<evidence type="ECO:0000305" key="4"/>
<comment type="function">
    <text evidence="1">ATP-dependent RNA helicase involved in 40S ribosomal subunit biogenesis. Required for the processing and cleavage of 35S pre-rRNA at sites A0, A1, and A2, leading to mature 18S rRNA (By similarity).</text>
</comment>
<comment type="catalytic activity">
    <reaction>
        <text>ATP + H2O = ADP + phosphate + H(+)</text>
        <dbReference type="Rhea" id="RHEA:13065"/>
        <dbReference type="ChEBI" id="CHEBI:15377"/>
        <dbReference type="ChEBI" id="CHEBI:15378"/>
        <dbReference type="ChEBI" id="CHEBI:30616"/>
        <dbReference type="ChEBI" id="CHEBI:43474"/>
        <dbReference type="ChEBI" id="CHEBI:456216"/>
        <dbReference type="EC" id="3.6.4.13"/>
    </reaction>
</comment>
<comment type="subcellular location">
    <subcellularLocation>
        <location evidence="1">Nucleus</location>
        <location evidence="1">Nucleolus</location>
    </subcellularLocation>
</comment>
<comment type="domain">
    <text>The Q motif is unique to and characteristic of the DEAD box family of RNA helicases and controls ATP binding and hydrolysis.</text>
</comment>
<comment type="similarity">
    <text evidence="4">Belongs to the DEAD box helicase family. DDX48/FAL1 subfamily.</text>
</comment>
<keyword id="KW-0067">ATP-binding</keyword>
<keyword id="KW-0347">Helicase</keyword>
<keyword id="KW-0378">Hydrolase</keyword>
<keyword id="KW-0547">Nucleotide-binding</keyword>
<keyword id="KW-0539">Nucleus</keyword>
<keyword id="KW-1185">Reference proteome</keyword>
<keyword id="KW-0690">Ribosome biogenesis</keyword>
<keyword id="KW-0694">RNA-binding</keyword>
<keyword id="KW-0698">rRNA processing</keyword>
<dbReference type="EC" id="3.6.4.13"/>
<dbReference type="EMBL" id="CH476628">
    <property type="protein sequence ID" value="EDO03954.1"/>
    <property type="molecule type" value="Genomic_DNA"/>
</dbReference>
<dbReference type="RefSeq" id="XP_001592196.1">
    <property type="nucleotide sequence ID" value="XM_001592146.1"/>
</dbReference>
<dbReference type="SMR" id="A7EM88"/>
<dbReference type="FunCoup" id="A7EM88">
    <property type="interactions" value="605"/>
</dbReference>
<dbReference type="STRING" id="665079.A7EM88"/>
<dbReference type="GeneID" id="5488656"/>
<dbReference type="KEGG" id="ssl:SS1G_06435"/>
<dbReference type="VEuPathDB" id="FungiDB:sscle_13g092770"/>
<dbReference type="InParanoid" id="A7EM88"/>
<dbReference type="OMA" id="TRFHDFK"/>
<dbReference type="OrthoDB" id="10265785at2759"/>
<dbReference type="Proteomes" id="UP000001312">
    <property type="component" value="Unassembled WGS sequence"/>
</dbReference>
<dbReference type="GO" id="GO:0071013">
    <property type="term" value="C:catalytic step 2 spliceosome"/>
    <property type="evidence" value="ECO:0000318"/>
    <property type="project" value="GO_Central"/>
</dbReference>
<dbReference type="GO" id="GO:0005730">
    <property type="term" value="C:nucleolus"/>
    <property type="evidence" value="ECO:0000318"/>
    <property type="project" value="GO_Central"/>
</dbReference>
<dbReference type="GO" id="GO:0005524">
    <property type="term" value="F:ATP binding"/>
    <property type="evidence" value="ECO:0007669"/>
    <property type="project" value="UniProtKB-KW"/>
</dbReference>
<dbReference type="GO" id="GO:0016887">
    <property type="term" value="F:ATP hydrolysis activity"/>
    <property type="evidence" value="ECO:0007669"/>
    <property type="project" value="RHEA"/>
</dbReference>
<dbReference type="GO" id="GO:0003729">
    <property type="term" value="F:mRNA binding"/>
    <property type="evidence" value="ECO:0000318"/>
    <property type="project" value="GO_Central"/>
</dbReference>
<dbReference type="GO" id="GO:0003724">
    <property type="term" value="F:RNA helicase activity"/>
    <property type="evidence" value="ECO:0000318"/>
    <property type="project" value="GO_Central"/>
</dbReference>
<dbReference type="GO" id="GO:0000398">
    <property type="term" value="P:mRNA splicing, via spliceosome"/>
    <property type="evidence" value="ECO:0000318"/>
    <property type="project" value="GO_Central"/>
</dbReference>
<dbReference type="GO" id="GO:0006364">
    <property type="term" value="P:rRNA processing"/>
    <property type="evidence" value="ECO:0007669"/>
    <property type="project" value="UniProtKB-KW"/>
</dbReference>
<dbReference type="CDD" id="cd18045">
    <property type="entry name" value="DEADc_EIF4AIII_DDX48"/>
    <property type="match status" value="1"/>
</dbReference>
<dbReference type="CDD" id="cd18787">
    <property type="entry name" value="SF2_C_DEAD"/>
    <property type="match status" value="1"/>
</dbReference>
<dbReference type="FunFam" id="3.40.50.300:FF:000031">
    <property type="entry name" value="Eukaryotic initiation factor 4A-III"/>
    <property type="match status" value="1"/>
</dbReference>
<dbReference type="FunFam" id="3.40.50.300:FF:000498">
    <property type="entry name" value="Eukaryotic initiation factor 4A-III"/>
    <property type="match status" value="1"/>
</dbReference>
<dbReference type="Gene3D" id="3.40.50.300">
    <property type="entry name" value="P-loop containing nucleotide triphosphate hydrolases"/>
    <property type="match status" value="2"/>
</dbReference>
<dbReference type="InterPro" id="IPR011545">
    <property type="entry name" value="DEAD/DEAH_box_helicase_dom"/>
</dbReference>
<dbReference type="InterPro" id="IPR014001">
    <property type="entry name" value="Helicase_ATP-bd"/>
</dbReference>
<dbReference type="InterPro" id="IPR001650">
    <property type="entry name" value="Helicase_C-like"/>
</dbReference>
<dbReference type="InterPro" id="IPR027417">
    <property type="entry name" value="P-loop_NTPase"/>
</dbReference>
<dbReference type="InterPro" id="IPR000629">
    <property type="entry name" value="RNA-helicase_DEAD-box_CS"/>
</dbReference>
<dbReference type="InterPro" id="IPR014014">
    <property type="entry name" value="RNA_helicase_DEAD_Q_motif"/>
</dbReference>
<dbReference type="PANTHER" id="PTHR47958">
    <property type="entry name" value="ATP-DEPENDENT RNA HELICASE DBP3"/>
    <property type="match status" value="1"/>
</dbReference>
<dbReference type="Pfam" id="PF00270">
    <property type="entry name" value="DEAD"/>
    <property type="match status" value="1"/>
</dbReference>
<dbReference type="Pfam" id="PF00271">
    <property type="entry name" value="Helicase_C"/>
    <property type="match status" value="1"/>
</dbReference>
<dbReference type="SMART" id="SM00487">
    <property type="entry name" value="DEXDc"/>
    <property type="match status" value="1"/>
</dbReference>
<dbReference type="SMART" id="SM00490">
    <property type="entry name" value="HELICc"/>
    <property type="match status" value="1"/>
</dbReference>
<dbReference type="SUPFAM" id="SSF52540">
    <property type="entry name" value="P-loop containing nucleoside triphosphate hydrolases"/>
    <property type="match status" value="1"/>
</dbReference>
<dbReference type="PROSITE" id="PS00039">
    <property type="entry name" value="DEAD_ATP_HELICASE"/>
    <property type="match status" value="1"/>
</dbReference>
<dbReference type="PROSITE" id="PS51192">
    <property type="entry name" value="HELICASE_ATP_BIND_1"/>
    <property type="match status" value="1"/>
</dbReference>
<dbReference type="PROSITE" id="PS51194">
    <property type="entry name" value="HELICASE_CTER"/>
    <property type="match status" value="1"/>
</dbReference>
<dbReference type="PROSITE" id="PS51195">
    <property type="entry name" value="Q_MOTIF"/>
    <property type="match status" value="1"/>
</dbReference>
<proteinExistence type="inferred from homology"/>
<feature type="chain" id="PRO_0000310177" description="ATP-dependent RNA helicase fal1">
    <location>
        <begin position="1"/>
        <end position="399"/>
    </location>
</feature>
<feature type="domain" description="Helicase ATP-binding" evidence="2">
    <location>
        <begin position="56"/>
        <end position="226"/>
    </location>
</feature>
<feature type="domain" description="Helicase C-terminal" evidence="3">
    <location>
        <begin position="237"/>
        <end position="398"/>
    </location>
</feature>
<feature type="short sequence motif" description="Q motif">
    <location>
        <begin position="25"/>
        <end position="53"/>
    </location>
</feature>
<feature type="short sequence motif" description="DEAD box">
    <location>
        <begin position="174"/>
        <end position="177"/>
    </location>
</feature>
<feature type="binding site" evidence="2">
    <location>
        <begin position="69"/>
        <end position="76"/>
    </location>
    <ligand>
        <name>ATP</name>
        <dbReference type="ChEBI" id="CHEBI:30616"/>
    </ligand>
</feature>
<organism>
    <name type="scientific">Sclerotinia sclerotiorum (strain ATCC 18683 / 1980 / Ss-1)</name>
    <name type="common">White mold</name>
    <name type="synonym">Whetzelinia sclerotiorum</name>
    <dbReference type="NCBI Taxonomy" id="665079"/>
    <lineage>
        <taxon>Eukaryota</taxon>
        <taxon>Fungi</taxon>
        <taxon>Dikarya</taxon>
        <taxon>Ascomycota</taxon>
        <taxon>Pezizomycotina</taxon>
        <taxon>Leotiomycetes</taxon>
        <taxon>Helotiales</taxon>
        <taxon>Sclerotiniaceae</taxon>
        <taxon>Sclerotinia</taxon>
    </lineage>
</organism>
<protein>
    <recommendedName>
        <fullName>ATP-dependent RNA helicase fal1</fullName>
        <ecNumber>3.6.4.13</ecNumber>
    </recommendedName>
</protein>
<gene>
    <name type="primary">fal1</name>
    <name type="ORF">SS1G_06435</name>
</gene>
<sequence length="399" mass="45498">MAEGIDRKMDDRMEFTTSADVTVAPTFQDMHLKENLLRGIYAYGYESPSAVQSRAIVQICKGRDTIAQAQSGTGKTATFSISMLQVIDTAVRETQALVLSPTRELATQIQSVVMALGDYMNVQCHACIGGTNVGEDIRKLDYGQHIVSGTPGRVADMIRRRNLRTRHIKMLVLDEADELLNRGFREQIYDVYRYLPPATQVVVVSATLPYDVLDMTTKFMTDPVRILVKRDELTLEGLKQYFIAVEKEEWKFDTLCDLYDTLTITQAVIFCNTRRKVDWLTDKMREANFTVSSMHGEMPQKERDSIMQDFRQGNSRVLISTDVWARGIDVQQVSLVINYDLPVNRENYIHRIGRSGRFGRKGVAINFVTSEDVRILRDIELYYSTQIDEMPMNVADLLT</sequence>